<dbReference type="EMBL" id="CP000422">
    <property type="protein sequence ID" value="ABJ68020.1"/>
    <property type="molecule type" value="Genomic_DNA"/>
</dbReference>
<dbReference type="RefSeq" id="WP_002833090.1">
    <property type="nucleotide sequence ID" value="NC_008525.1"/>
</dbReference>
<dbReference type="SMR" id="Q03FK2"/>
<dbReference type="STRING" id="278197.PEPE_0964"/>
<dbReference type="GeneID" id="33062235"/>
<dbReference type="KEGG" id="ppe:PEPE_0964"/>
<dbReference type="eggNOG" id="COG4974">
    <property type="taxonomic scope" value="Bacteria"/>
</dbReference>
<dbReference type="HOGENOM" id="CLU_027562_9_0_9"/>
<dbReference type="OrthoDB" id="9801717at2"/>
<dbReference type="Proteomes" id="UP000000773">
    <property type="component" value="Chromosome"/>
</dbReference>
<dbReference type="GO" id="GO:0005737">
    <property type="term" value="C:cytoplasm"/>
    <property type="evidence" value="ECO:0007669"/>
    <property type="project" value="UniProtKB-SubCell"/>
</dbReference>
<dbReference type="GO" id="GO:0003677">
    <property type="term" value="F:DNA binding"/>
    <property type="evidence" value="ECO:0007669"/>
    <property type="project" value="UniProtKB-KW"/>
</dbReference>
<dbReference type="GO" id="GO:0009037">
    <property type="term" value="F:tyrosine-based site-specific recombinase activity"/>
    <property type="evidence" value="ECO:0007669"/>
    <property type="project" value="UniProtKB-UniRule"/>
</dbReference>
<dbReference type="GO" id="GO:0051301">
    <property type="term" value="P:cell division"/>
    <property type="evidence" value="ECO:0007669"/>
    <property type="project" value="UniProtKB-KW"/>
</dbReference>
<dbReference type="GO" id="GO:0007059">
    <property type="term" value="P:chromosome segregation"/>
    <property type="evidence" value="ECO:0007669"/>
    <property type="project" value="UniProtKB-UniRule"/>
</dbReference>
<dbReference type="GO" id="GO:0006313">
    <property type="term" value="P:DNA transposition"/>
    <property type="evidence" value="ECO:0007669"/>
    <property type="project" value="UniProtKB-UniRule"/>
</dbReference>
<dbReference type="CDD" id="cd00798">
    <property type="entry name" value="INT_XerDC_C"/>
    <property type="match status" value="1"/>
</dbReference>
<dbReference type="Gene3D" id="1.10.150.130">
    <property type="match status" value="1"/>
</dbReference>
<dbReference type="Gene3D" id="1.10.443.10">
    <property type="entry name" value="Intergrase catalytic core"/>
    <property type="match status" value="1"/>
</dbReference>
<dbReference type="HAMAP" id="MF_01808">
    <property type="entry name" value="Recomb_XerC_XerD"/>
    <property type="match status" value="1"/>
</dbReference>
<dbReference type="InterPro" id="IPR044068">
    <property type="entry name" value="CB"/>
</dbReference>
<dbReference type="InterPro" id="IPR011010">
    <property type="entry name" value="DNA_brk_join_enz"/>
</dbReference>
<dbReference type="InterPro" id="IPR013762">
    <property type="entry name" value="Integrase-like_cat_sf"/>
</dbReference>
<dbReference type="InterPro" id="IPR002104">
    <property type="entry name" value="Integrase_catalytic"/>
</dbReference>
<dbReference type="InterPro" id="IPR010998">
    <property type="entry name" value="Integrase_recombinase_N"/>
</dbReference>
<dbReference type="InterPro" id="IPR004107">
    <property type="entry name" value="Integrase_SAM-like_N"/>
</dbReference>
<dbReference type="InterPro" id="IPR011931">
    <property type="entry name" value="Recomb_XerC"/>
</dbReference>
<dbReference type="InterPro" id="IPR023009">
    <property type="entry name" value="Tyrosine_recombinase_XerC/XerD"/>
</dbReference>
<dbReference type="InterPro" id="IPR050090">
    <property type="entry name" value="Tyrosine_recombinase_XerCD"/>
</dbReference>
<dbReference type="NCBIfam" id="NF001399">
    <property type="entry name" value="PRK00283.1"/>
    <property type="match status" value="1"/>
</dbReference>
<dbReference type="NCBIfam" id="NF040815">
    <property type="entry name" value="recomb_XerA_Arch"/>
    <property type="match status" value="1"/>
</dbReference>
<dbReference type="NCBIfam" id="TIGR02224">
    <property type="entry name" value="recomb_XerC"/>
    <property type="match status" value="1"/>
</dbReference>
<dbReference type="PANTHER" id="PTHR30349">
    <property type="entry name" value="PHAGE INTEGRASE-RELATED"/>
    <property type="match status" value="1"/>
</dbReference>
<dbReference type="PANTHER" id="PTHR30349:SF77">
    <property type="entry name" value="TYROSINE RECOMBINASE XERC"/>
    <property type="match status" value="1"/>
</dbReference>
<dbReference type="Pfam" id="PF02899">
    <property type="entry name" value="Phage_int_SAM_1"/>
    <property type="match status" value="1"/>
</dbReference>
<dbReference type="Pfam" id="PF00589">
    <property type="entry name" value="Phage_integrase"/>
    <property type="match status" value="1"/>
</dbReference>
<dbReference type="SUPFAM" id="SSF56349">
    <property type="entry name" value="DNA breaking-rejoining enzymes"/>
    <property type="match status" value="1"/>
</dbReference>
<dbReference type="PROSITE" id="PS51900">
    <property type="entry name" value="CB"/>
    <property type="match status" value="1"/>
</dbReference>
<dbReference type="PROSITE" id="PS51898">
    <property type="entry name" value="TYR_RECOMBINASE"/>
    <property type="match status" value="1"/>
</dbReference>
<reference key="1">
    <citation type="journal article" date="2006" name="Proc. Natl. Acad. Sci. U.S.A.">
        <title>Comparative genomics of the lactic acid bacteria.</title>
        <authorList>
            <person name="Makarova K.S."/>
            <person name="Slesarev A."/>
            <person name="Wolf Y.I."/>
            <person name="Sorokin A."/>
            <person name="Mirkin B."/>
            <person name="Koonin E.V."/>
            <person name="Pavlov A."/>
            <person name="Pavlova N."/>
            <person name="Karamychev V."/>
            <person name="Polouchine N."/>
            <person name="Shakhova V."/>
            <person name="Grigoriev I."/>
            <person name="Lou Y."/>
            <person name="Rohksar D."/>
            <person name="Lucas S."/>
            <person name="Huang K."/>
            <person name="Goodstein D.M."/>
            <person name="Hawkins T."/>
            <person name="Plengvidhya V."/>
            <person name="Welker D."/>
            <person name="Hughes J."/>
            <person name="Goh Y."/>
            <person name="Benson A."/>
            <person name="Baldwin K."/>
            <person name="Lee J.-H."/>
            <person name="Diaz-Muniz I."/>
            <person name="Dosti B."/>
            <person name="Smeianov V."/>
            <person name="Wechter W."/>
            <person name="Barabote R."/>
            <person name="Lorca G."/>
            <person name="Altermann E."/>
            <person name="Barrangou R."/>
            <person name="Ganesan B."/>
            <person name="Xie Y."/>
            <person name="Rawsthorne H."/>
            <person name="Tamir D."/>
            <person name="Parker C."/>
            <person name="Breidt F."/>
            <person name="Broadbent J.R."/>
            <person name="Hutkins R."/>
            <person name="O'Sullivan D."/>
            <person name="Steele J."/>
            <person name="Unlu G."/>
            <person name="Saier M.H. Jr."/>
            <person name="Klaenhammer T."/>
            <person name="Richardson P."/>
            <person name="Kozyavkin S."/>
            <person name="Weimer B.C."/>
            <person name="Mills D.A."/>
        </authorList>
    </citation>
    <scope>NUCLEOTIDE SEQUENCE [LARGE SCALE GENOMIC DNA]</scope>
    <source>
        <strain>ATCC 25745 / CCUG 21536 / LMG 10740 / 183-1w</strain>
    </source>
</reference>
<evidence type="ECO:0000255" key="1">
    <source>
        <dbReference type="HAMAP-Rule" id="MF_01808"/>
    </source>
</evidence>
<evidence type="ECO:0000255" key="2">
    <source>
        <dbReference type="PROSITE-ProRule" id="PRU01246"/>
    </source>
</evidence>
<evidence type="ECO:0000255" key="3">
    <source>
        <dbReference type="PROSITE-ProRule" id="PRU01248"/>
    </source>
</evidence>
<feature type="chain" id="PRO_1000070021" description="Tyrosine recombinase XerC">
    <location>
        <begin position="1"/>
        <end position="301"/>
    </location>
</feature>
<feature type="domain" description="Core-binding (CB)" evidence="3">
    <location>
        <begin position="1"/>
        <end position="85"/>
    </location>
</feature>
<feature type="domain" description="Tyr recombinase" evidence="2">
    <location>
        <begin position="106"/>
        <end position="292"/>
    </location>
</feature>
<feature type="active site" evidence="1">
    <location>
        <position position="147"/>
    </location>
</feature>
<feature type="active site" evidence="1">
    <location>
        <position position="171"/>
    </location>
</feature>
<feature type="active site" evidence="1">
    <location>
        <position position="244"/>
    </location>
</feature>
<feature type="active site" evidence="1">
    <location>
        <position position="247"/>
    </location>
</feature>
<feature type="active site" evidence="1">
    <location>
        <position position="270"/>
    </location>
</feature>
<feature type="active site" description="O-(3'-phospho-DNA)-tyrosine intermediate" evidence="1">
    <location>
        <position position="279"/>
    </location>
</feature>
<gene>
    <name evidence="1" type="primary">xerC</name>
    <name type="ordered locus">PEPE_0964</name>
</gene>
<name>XERC_PEDPA</name>
<sequence length="301" mass="35159">MELISLFKQYLTVERQYSEKTVTAYLEDIDAFQKFLTDTGDKTDLLLVDRFDVNVYMSYLFDRHLARTSISRKVSALRSFYRFLVKNDLVDKNPFELVQLKKQSDKLPHFFYEKEMNMLFEAVYQAEGAQKLRNIAILEVLYGTGMRVSECAALQWSDIDFSMQTILVLGKGNKERYVPFGRYAKEALQNYRKNEWEPFLSKYKQTHNFVFINHYAKPITTTGIEYILNQVITASSLNGKIHPHMLRHSFATALLNNGADLRTVQELLGHSSLSTTQIYTHVTKEKLQESYRKYFPRSTDA</sequence>
<keyword id="KW-0131">Cell cycle</keyword>
<keyword id="KW-0132">Cell division</keyword>
<keyword id="KW-0159">Chromosome partition</keyword>
<keyword id="KW-0963">Cytoplasm</keyword>
<keyword id="KW-0229">DNA integration</keyword>
<keyword id="KW-0233">DNA recombination</keyword>
<keyword id="KW-0238">DNA-binding</keyword>
<organism>
    <name type="scientific">Pediococcus pentosaceus (strain ATCC 25745 / CCUG 21536 / LMG 10740 / 183-1w)</name>
    <dbReference type="NCBI Taxonomy" id="278197"/>
    <lineage>
        <taxon>Bacteria</taxon>
        <taxon>Bacillati</taxon>
        <taxon>Bacillota</taxon>
        <taxon>Bacilli</taxon>
        <taxon>Lactobacillales</taxon>
        <taxon>Lactobacillaceae</taxon>
        <taxon>Pediococcus</taxon>
    </lineage>
</organism>
<comment type="function">
    <text evidence="1">Site-specific tyrosine recombinase, which acts by catalyzing the cutting and rejoining of the recombining DNA molecules. The XerC-XerD complex is essential to convert dimers of the bacterial chromosome into monomers to permit their segregation at cell division. It also contributes to the segregational stability of plasmids.</text>
</comment>
<comment type="subunit">
    <text evidence="1">Forms a cyclic heterotetrameric complex composed of two molecules of XerC and two molecules of XerD.</text>
</comment>
<comment type="subcellular location">
    <subcellularLocation>
        <location evidence="1">Cytoplasm</location>
    </subcellularLocation>
</comment>
<comment type="similarity">
    <text evidence="1">Belongs to the 'phage' integrase family. XerC subfamily.</text>
</comment>
<protein>
    <recommendedName>
        <fullName evidence="1">Tyrosine recombinase XerC</fullName>
    </recommendedName>
</protein>
<accession>Q03FK2</accession>
<proteinExistence type="inferred from homology"/>